<sequence length="315" mass="37029">MSGPNIVHSGYGLRCEKLDKPLNLGWGLDNSAVLHWPGELPTGWLCDALDQIFIAAPQLSAVVLPWSEWCEEPQALTLFGQVQSDIIHRSAFWQLPLWLSSPANRASGEMVFDAEREIYFPQRPPRPQGEVYRRYDPRIRRMLSFRIADPVSDAERFTRWMNDPRVEYFWEQSGSLEVQIAYLERQLTSKHAFPLIGCFDDRPVSNIEIYWAAEDRIGRHYSWQPFDRGLHLLVGEQQWRGAHYVQSWLRGVTHYLLLNEPRTQRTVLEPRTDNQRLFRHLEPAGYRTIKEFDFPHKRSRMVMADRHHFFTEVGL</sequence>
<accession>Q47317</accession>
<feature type="initiator methionine" description="Removed" evidence="2">
    <location>
        <position position="1"/>
    </location>
</feature>
<feature type="chain" id="PRO_0000084275" description="N(6)-hydroxylysine O-acetyltransferase">
    <location>
        <begin position="2"/>
        <end position="315"/>
    </location>
</feature>
<keyword id="KW-1003">Cell membrane</keyword>
<keyword id="KW-0963">Cytoplasm</keyword>
<keyword id="KW-0903">Direct protein sequencing</keyword>
<keyword id="KW-0472">Membrane</keyword>
<keyword id="KW-0614">Plasmid</keyword>
<keyword id="KW-0808">Transferase</keyword>
<reference key="1">
    <citation type="journal article" date="1994" name="J. Mol. Biol.">
        <title>The organization of intercistronic regions of the aerobactin operon of pColV-K30 may account for the differential expression of the iucABCD iutA genes.</title>
        <authorList>
            <person name="Martinez J.L."/>
            <person name="Herrero M."/>
            <person name="de Lorenzo V."/>
        </authorList>
    </citation>
    <scope>NUCLEOTIDE SEQUENCE [GENOMIC DNA]</scope>
</reference>
<reference key="2">
    <citation type="journal article" date="1986" name="Biochemistry">
        <title>Isolation and properties of N epsilon-hydroxylysine:acetyl coenzyme A N epsilon-transacetylase from Escherichia coli pABN11.</title>
        <authorList>
            <person name="Coy M."/>
            <person name="Paw B.H."/>
            <person name="Bindereif A."/>
            <person name="Neilands J.B."/>
        </authorList>
    </citation>
    <scope>PROTEIN SEQUENCE OF 2-7</scope>
    <scope>FUNCTION</scope>
    <scope>CATALYTIC ACTIVITY</scope>
    <scope>BIOPHYSICOCHEMICAL PROPERTIES</scope>
</reference>
<reference key="3">
    <citation type="journal article" date="1986" name="J. Bacteriol.">
        <title>Aerobactin biosynthesis and transport genes of plasmid ColV-K30 in Escherichia coli K-12.</title>
        <authorList>
            <person name="de Lorenzo V."/>
            <person name="Bindereif A."/>
            <person name="Paw B.H."/>
            <person name="Neilands J.B."/>
        </authorList>
    </citation>
    <scope>FUNCTION IN AEROBACTIN BIOSYNTHESIS</scope>
    <scope>NOMENCLATURE</scope>
</reference>
<protein>
    <recommendedName>
        <fullName>N(6)-hydroxylysine O-acetyltransferase</fullName>
        <ecNumber evidence="2">2.3.1.102</ecNumber>
    </recommendedName>
    <alternativeName>
        <fullName>N(6)-hydroxylysine acetylase</fullName>
    </alternativeName>
</protein>
<geneLocation type="plasmid">
    <name>IncFI ColV3-K30</name>
</geneLocation>
<name>IUCB_ECOLX</name>
<evidence type="ECO:0000269" key="1">
    <source>
    </source>
</evidence>
<evidence type="ECO:0000269" key="2">
    <source>
    </source>
</evidence>
<evidence type="ECO:0000305" key="3"/>
<dbReference type="EC" id="2.3.1.102" evidence="2"/>
<dbReference type="EMBL" id="X76100">
    <property type="protein sequence ID" value="CAA53708.1"/>
    <property type="molecule type" value="Genomic_DNA"/>
</dbReference>
<dbReference type="PIR" id="S44019">
    <property type="entry name" value="S44019"/>
</dbReference>
<dbReference type="SMR" id="Q47317"/>
<dbReference type="KEGG" id="ag:CAA53708"/>
<dbReference type="BioCyc" id="MetaCyc:MONOMER-11591"/>
<dbReference type="UniPathway" id="UPA00014"/>
<dbReference type="GO" id="GO:0005737">
    <property type="term" value="C:cytoplasm"/>
    <property type="evidence" value="ECO:0007669"/>
    <property type="project" value="UniProtKB-SubCell"/>
</dbReference>
<dbReference type="GO" id="GO:0005886">
    <property type="term" value="C:plasma membrane"/>
    <property type="evidence" value="ECO:0007669"/>
    <property type="project" value="UniProtKB-SubCell"/>
</dbReference>
<dbReference type="GO" id="GO:0016410">
    <property type="term" value="F:N-acyltransferase activity"/>
    <property type="evidence" value="ECO:0007669"/>
    <property type="project" value="TreeGrafter"/>
</dbReference>
<dbReference type="GO" id="GO:0050133">
    <property type="term" value="F:N6-hydroxylysine O-acetyltransferase activity"/>
    <property type="evidence" value="ECO:0000315"/>
    <property type="project" value="UniProtKB"/>
</dbReference>
<dbReference type="GO" id="GO:0019270">
    <property type="term" value="P:aerobactin biosynthetic process"/>
    <property type="evidence" value="ECO:0000315"/>
    <property type="project" value="UniProtKB"/>
</dbReference>
<dbReference type="GO" id="GO:0019290">
    <property type="term" value="P:siderophore biosynthetic process"/>
    <property type="evidence" value="ECO:0007669"/>
    <property type="project" value="InterPro"/>
</dbReference>
<dbReference type="FunFam" id="3.40.630.30:FF:000256">
    <property type="entry name" value="Putative lysine N-acyltransferase C17G9.06c"/>
    <property type="match status" value="1"/>
</dbReference>
<dbReference type="Gene3D" id="3.40.630.30">
    <property type="match status" value="1"/>
</dbReference>
<dbReference type="InterPro" id="IPR016181">
    <property type="entry name" value="Acyl_CoA_acyltransferase"/>
</dbReference>
<dbReference type="InterPro" id="IPR019432">
    <property type="entry name" value="Acyltransferase_MbtK/IucB-like"/>
</dbReference>
<dbReference type="PANTHER" id="PTHR31438">
    <property type="entry name" value="LYSINE N-ACYLTRANSFERASE C17G9.06C-RELATED"/>
    <property type="match status" value="1"/>
</dbReference>
<dbReference type="PANTHER" id="PTHR31438:SF1">
    <property type="entry name" value="LYSINE N-ACYLTRANSFERASE C17G9.06C-RELATED"/>
    <property type="match status" value="1"/>
</dbReference>
<dbReference type="Pfam" id="PF13523">
    <property type="entry name" value="Acetyltransf_8"/>
    <property type="match status" value="1"/>
</dbReference>
<dbReference type="SMART" id="SM01006">
    <property type="entry name" value="AlcB"/>
    <property type="match status" value="1"/>
</dbReference>
<dbReference type="SUPFAM" id="SSF55729">
    <property type="entry name" value="Acyl-CoA N-acyltransferases (Nat)"/>
    <property type="match status" value="1"/>
</dbReference>
<comment type="function">
    <text evidence="1 2">Catalyzes the transfer of acetyl from acetyl-CoA to the N-hydroxylysine. Involved in the biosynthesis of the siderophore aerobactin which is a chelator that mediates the high-affinity iron transport systems induced under iron-stressed conditions.</text>
</comment>
<comment type="catalytic activity">
    <reaction evidence="2">
        <text>N(6)-hydroxy-L-lysine + acetyl-CoA = N(6)-acetyl-N(6)-hydroxy-L-lysine + CoA</text>
        <dbReference type="Rhea" id="RHEA:22388"/>
        <dbReference type="ChEBI" id="CHEBI:57287"/>
        <dbReference type="ChEBI" id="CHEBI:57288"/>
        <dbReference type="ChEBI" id="CHEBI:57820"/>
        <dbReference type="ChEBI" id="CHEBI:58122"/>
        <dbReference type="EC" id="2.3.1.102"/>
    </reaction>
</comment>
<comment type="biophysicochemical properties">
    <kinetics>
        <KM evidence="2">0.043 mM for N(6)-hydroxy-L-lysine</KM>
        <KM evidence="2">0.079 mM for N(5)-hydroxy-L-ornithine</KM>
        <KM evidence="2">0.099 mM for 1-amino-5-(hydroxyamino)pentane</KM>
        <KM evidence="2">0.101 mM for N-methylhydroxylamine</KM>
        <KM evidence="2">1.8 mM for hydroxylamine</KM>
    </kinetics>
    <phDependence>
        <text evidence="2">Optimum pH is 7.</text>
    </phDependence>
    <temperatureDependence>
        <text evidence="2">Optimum temperature is 40 degrees Celsius.</text>
    </temperatureDependence>
</comment>
<comment type="pathway">
    <text>Siderophore biosynthesis; aerobactin biosynthesis.</text>
</comment>
<comment type="subcellular location">
    <subcellularLocation>
        <location>Cytoplasm</location>
    </subcellularLocation>
    <subcellularLocation>
        <location evidence="3">Cell membrane</location>
    </subcellularLocation>
</comment>
<comment type="similarity">
    <text evidence="3">Belongs to the IucB family.</text>
</comment>
<organism>
    <name type="scientific">Escherichia coli</name>
    <dbReference type="NCBI Taxonomy" id="562"/>
    <lineage>
        <taxon>Bacteria</taxon>
        <taxon>Pseudomonadati</taxon>
        <taxon>Pseudomonadota</taxon>
        <taxon>Gammaproteobacteria</taxon>
        <taxon>Enterobacterales</taxon>
        <taxon>Enterobacteriaceae</taxon>
        <taxon>Escherichia</taxon>
    </lineage>
</organism>
<gene>
    <name type="primary">iucB</name>
</gene>
<proteinExistence type="evidence at protein level"/>